<protein>
    <recommendedName>
        <fullName evidence="1">Deoxyuridine 5'-triphosphate nucleotidohydrolase</fullName>
        <shortName evidence="1">dUTPase</shortName>
        <ecNumber evidence="1">3.6.1.23</ecNumber>
    </recommendedName>
    <alternativeName>
        <fullName evidence="1">dUTP pyrophosphatase</fullName>
    </alternativeName>
</protein>
<proteinExistence type="inferred from homology"/>
<sequence>MQAVQVKVLNPKITEDKAFSLPTRATDGSAGIDLRACIDEPLTIKAGATHLIGTGLAVYIQDPNFAGMILPRSGLGHKHGIVLGNLVGLIDADYQGELMVSIWNRSQEDFVLTPAERMAQYVVVPVARPEFEVVTEFSDTSARGAGGFGHSGRQ</sequence>
<keyword id="KW-0378">Hydrolase</keyword>
<keyword id="KW-0460">Magnesium</keyword>
<keyword id="KW-0479">Metal-binding</keyword>
<keyword id="KW-0546">Nucleotide metabolism</keyword>
<reference key="1">
    <citation type="submission" date="2006-03" db="EMBL/GenBank/DDBJ databases">
        <title>Complete sequence of chromosome of Psychrobacter cryohalolentis K5.</title>
        <authorList>
            <consortium name="US DOE Joint Genome Institute"/>
            <person name="Copeland A."/>
            <person name="Lucas S."/>
            <person name="Lapidus A."/>
            <person name="Barry K."/>
            <person name="Detter J.C."/>
            <person name="Glavina T."/>
            <person name="Hammon N."/>
            <person name="Israni S."/>
            <person name="Dalin E."/>
            <person name="Tice H."/>
            <person name="Pitluck S."/>
            <person name="Brettin T."/>
            <person name="Bruce D."/>
            <person name="Han C."/>
            <person name="Tapia R."/>
            <person name="Sims D.R."/>
            <person name="Gilna P."/>
            <person name="Schmutz J."/>
            <person name="Larimer F."/>
            <person name="Land M."/>
            <person name="Hauser L."/>
            <person name="Kyrpides N."/>
            <person name="Kim E."/>
            <person name="Richardson P."/>
        </authorList>
    </citation>
    <scope>NUCLEOTIDE SEQUENCE [LARGE SCALE GENOMIC DNA]</scope>
    <source>
        <strain>ATCC BAA-1226 / DSM 17306 / VKM B-2378 / K5</strain>
    </source>
</reference>
<organism>
    <name type="scientific">Psychrobacter cryohalolentis (strain ATCC BAA-1226 / DSM 17306 / VKM B-2378 / K5)</name>
    <dbReference type="NCBI Taxonomy" id="335284"/>
    <lineage>
        <taxon>Bacteria</taxon>
        <taxon>Pseudomonadati</taxon>
        <taxon>Pseudomonadota</taxon>
        <taxon>Gammaproteobacteria</taxon>
        <taxon>Moraxellales</taxon>
        <taxon>Moraxellaceae</taxon>
        <taxon>Psychrobacter</taxon>
    </lineage>
</organism>
<feature type="chain" id="PRO_1000015499" description="Deoxyuridine 5'-triphosphate nucleotidohydrolase">
    <location>
        <begin position="1"/>
        <end position="154"/>
    </location>
</feature>
<feature type="binding site" evidence="1">
    <location>
        <begin position="72"/>
        <end position="74"/>
    </location>
    <ligand>
        <name>substrate</name>
    </ligand>
</feature>
<feature type="binding site" evidence="1">
    <location>
        <position position="85"/>
    </location>
    <ligand>
        <name>substrate</name>
    </ligand>
</feature>
<feature type="binding site" evidence="1">
    <location>
        <begin position="89"/>
        <end position="91"/>
    </location>
    <ligand>
        <name>substrate</name>
    </ligand>
</feature>
<feature type="binding site" evidence="1">
    <location>
        <position position="99"/>
    </location>
    <ligand>
        <name>substrate</name>
    </ligand>
</feature>
<evidence type="ECO:0000255" key="1">
    <source>
        <dbReference type="HAMAP-Rule" id="MF_00116"/>
    </source>
</evidence>
<accession>Q1QDA0</accession>
<comment type="function">
    <text evidence="1">This enzyme is involved in nucleotide metabolism: it produces dUMP, the immediate precursor of thymidine nucleotides and it decreases the intracellular concentration of dUTP so that uracil cannot be incorporated into DNA.</text>
</comment>
<comment type="catalytic activity">
    <reaction evidence="1">
        <text>dUTP + H2O = dUMP + diphosphate + H(+)</text>
        <dbReference type="Rhea" id="RHEA:10248"/>
        <dbReference type="ChEBI" id="CHEBI:15377"/>
        <dbReference type="ChEBI" id="CHEBI:15378"/>
        <dbReference type="ChEBI" id="CHEBI:33019"/>
        <dbReference type="ChEBI" id="CHEBI:61555"/>
        <dbReference type="ChEBI" id="CHEBI:246422"/>
        <dbReference type="EC" id="3.6.1.23"/>
    </reaction>
</comment>
<comment type="cofactor">
    <cofactor evidence="1">
        <name>Mg(2+)</name>
        <dbReference type="ChEBI" id="CHEBI:18420"/>
    </cofactor>
</comment>
<comment type="pathway">
    <text evidence="1">Pyrimidine metabolism; dUMP biosynthesis; dUMP from dCTP (dUTP route): step 2/2.</text>
</comment>
<comment type="similarity">
    <text evidence="1">Belongs to the dUTPase family.</text>
</comment>
<dbReference type="EC" id="3.6.1.23" evidence="1"/>
<dbReference type="EMBL" id="CP000323">
    <property type="protein sequence ID" value="ABE74353.1"/>
    <property type="molecule type" value="Genomic_DNA"/>
</dbReference>
<dbReference type="RefSeq" id="WP_011512921.1">
    <property type="nucleotide sequence ID" value="NC_007969.1"/>
</dbReference>
<dbReference type="SMR" id="Q1QDA0"/>
<dbReference type="STRING" id="335284.Pcryo_0570"/>
<dbReference type="KEGG" id="pcr:Pcryo_0570"/>
<dbReference type="eggNOG" id="COG0756">
    <property type="taxonomic scope" value="Bacteria"/>
</dbReference>
<dbReference type="HOGENOM" id="CLU_068508_1_1_6"/>
<dbReference type="UniPathway" id="UPA00610">
    <property type="reaction ID" value="UER00666"/>
</dbReference>
<dbReference type="Proteomes" id="UP000002425">
    <property type="component" value="Chromosome"/>
</dbReference>
<dbReference type="GO" id="GO:0004170">
    <property type="term" value="F:dUTP diphosphatase activity"/>
    <property type="evidence" value="ECO:0007669"/>
    <property type="project" value="UniProtKB-UniRule"/>
</dbReference>
<dbReference type="GO" id="GO:0000287">
    <property type="term" value="F:magnesium ion binding"/>
    <property type="evidence" value="ECO:0007669"/>
    <property type="project" value="UniProtKB-UniRule"/>
</dbReference>
<dbReference type="GO" id="GO:0006226">
    <property type="term" value="P:dUMP biosynthetic process"/>
    <property type="evidence" value="ECO:0007669"/>
    <property type="project" value="UniProtKB-UniRule"/>
</dbReference>
<dbReference type="GO" id="GO:0046081">
    <property type="term" value="P:dUTP catabolic process"/>
    <property type="evidence" value="ECO:0007669"/>
    <property type="project" value="InterPro"/>
</dbReference>
<dbReference type="CDD" id="cd07557">
    <property type="entry name" value="trimeric_dUTPase"/>
    <property type="match status" value="1"/>
</dbReference>
<dbReference type="FunFam" id="2.70.40.10:FF:000002">
    <property type="entry name" value="dUTP diphosphatase"/>
    <property type="match status" value="1"/>
</dbReference>
<dbReference type="Gene3D" id="2.70.40.10">
    <property type="match status" value="1"/>
</dbReference>
<dbReference type="HAMAP" id="MF_00116">
    <property type="entry name" value="dUTPase_bact"/>
    <property type="match status" value="1"/>
</dbReference>
<dbReference type="InterPro" id="IPR008181">
    <property type="entry name" value="dUTPase"/>
</dbReference>
<dbReference type="InterPro" id="IPR029054">
    <property type="entry name" value="dUTPase-like"/>
</dbReference>
<dbReference type="InterPro" id="IPR036157">
    <property type="entry name" value="dUTPase-like_sf"/>
</dbReference>
<dbReference type="InterPro" id="IPR033704">
    <property type="entry name" value="dUTPase_trimeric"/>
</dbReference>
<dbReference type="NCBIfam" id="TIGR00576">
    <property type="entry name" value="dut"/>
    <property type="match status" value="1"/>
</dbReference>
<dbReference type="NCBIfam" id="NF001862">
    <property type="entry name" value="PRK00601.1"/>
    <property type="match status" value="1"/>
</dbReference>
<dbReference type="PANTHER" id="PTHR11241">
    <property type="entry name" value="DEOXYURIDINE 5'-TRIPHOSPHATE NUCLEOTIDOHYDROLASE"/>
    <property type="match status" value="1"/>
</dbReference>
<dbReference type="PANTHER" id="PTHR11241:SF0">
    <property type="entry name" value="DEOXYURIDINE 5'-TRIPHOSPHATE NUCLEOTIDOHYDROLASE"/>
    <property type="match status" value="1"/>
</dbReference>
<dbReference type="Pfam" id="PF00692">
    <property type="entry name" value="dUTPase"/>
    <property type="match status" value="1"/>
</dbReference>
<dbReference type="SUPFAM" id="SSF51283">
    <property type="entry name" value="dUTPase-like"/>
    <property type="match status" value="1"/>
</dbReference>
<gene>
    <name evidence="1" type="primary">dut</name>
    <name type="ordered locus">Pcryo_0570</name>
</gene>
<name>DUT_PSYCK</name>